<evidence type="ECO:0000255" key="1">
    <source>
        <dbReference type="HAMAP-Rule" id="MF_00236"/>
    </source>
</evidence>
<evidence type="ECO:0000256" key="2">
    <source>
        <dbReference type="SAM" id="MobiDB-lite"/>
    </source>
</evidence>
<reference key="1">
    <citation type="submission" date="2006-08" db="EMBL/GenBank/DDBJ databases">
        <title>Complete sequence of chromosome 1 of Burkholderia cepacia AMMD.</title>
        <authorList>
            <person name="Copeland A."/>
            <person name="Lucas S."/>
            <person name="Lapidus A."/>
            <person name="Barry K."/>
            <person name="Detter J.C."/>
            <person name="Glavina del Rio T."/>
            <person name="Hammon N."/>
            <person name="Israni S."/>
            <person name="Pitluck S."/>
            <person name="Bruce D."/>
            <person name="Chain P."/>
            <person name="Malfatti S."/>
            <person name="Shin M."/>
            <person name="Vergez L."/>
            <person name="Schmutz J."/>
            <person name="Larimer F."/>
            <person name="Land M."/>
            <person name="Hauser L."/>
            <person name="Kyrpides N."/>
            <person name="Kim E."/>
            <person name="Parke J."/>
            <person name="Coenye T."/>
            <person name="Konstantinidis K."/>
            <person name="Ramette A."/>
            <person name="Tiedje J."/>
            <person name="Richardson P."/>
        </authorList>
    </citation>
    <scope>NUCLEOTIDE SEQUENCE [LARGE SCALE GENOMIC DNA]</scope>
    <source>
        <strain>ATCC BAA-244 / DSM 16087 / CCUG 44356 / LMG 19182 / AMMD</strain>
    </source>
</reference>
<proteinExistence type="inferred from homology"/>
<feature type="chain" id="PRO_1000044363" description="Sec-independent protein translocase protein TatA">
    <location>
        <begin position="1"/>
        <end position="76"/>
    </location>
</feature>
<feature type="transmembrane region" description="Helical" evidence="1">
    <location>
        <begin position="1"/>
        <end position="21"/>
    </location>
</feature>
<feature type="region of interest" description="Disordered" evidence="2">
    <location>
        <begin position="40"/>
        <end position="76"/>
    </location>
</feature>
<feature type="compositionally biased region" description="Basic and acidic residues" evidence="2">
    <location>
        <begin position="64"/>
        <end position="76"/>
    </location>
</feature>
<gene>
    <name evidence="1" type="primary">tatA</name>
    <name type="ordered locus">Bamb_0354</name>
</gene>
<comment type="function">
    <text evidence="1">Part of the twin-arginine translocation (Tat) system that transports large folded proteins containing a characteristic twin-arginine motif in their signal peptide across membranes. TatA could form the protein-conducting channel of the Tat system.</text>
</comment>
<comment type="subunit">
    <text evidence="1">The Tat system comprises two distinct complexes: a TatABC complex, containing multiple copies of TatA, TatB and TatC subunits, and a separate TatA complex, containing only TatA subunits. Substrates initially bind to the TatABC complex, which probably triggers association of the separate TatA complex to form the active translocon.</text>
</comment>
<comment type="subcellular location">
    <subcellularLocation>
        <location evidence="1">Cell inner membrane</location>
        <topology evidence="1">Single-pass membrane protein</topology>
    </subcellularLocation>
</comment>
<comment type="similarity">
    <text evidence="1">Belongs to the TatA/E family.</text>
</comment>
<keyword id="KW-0997">Cell inner membrane</keyword>
<keyword id="KW-1003">Cell membrane</keyword>
<keyword id="KW-0472">Membrane</keyword>
<keyword id="KW-0653">Protein transport</keyword>
<keyword id="KW-0811">Translocation</keyword>
<keyword id="KW-0812">Transmembrane</keyword>
<keyword id="KW-1133">Transmembrane helix</keyword>
<keyword id="KW-0813">Transport</keyword>
<name>TATA_BURCM</name>
<organism>
    <name type="scientific">Burkholderia ambifaria (strain ATCC BAA-244 / DSM 16087 / CCUG 44356 / LMG 19182 / AMMD)</name>
    <name type="common">Burkholderia cepacia (strain AMMD)</name>
    <dbReference type="NCBI Taxonomy" id="339670"/>
    <lineage>
        <taxon>Bacteria</taxon>
        <taxon>Pseudomonadati</taxon>
        <taxon>Pseudomonadota</taxon>
        <taxon>Betaproteobacteria</taxon>
        <taxon>Burkholderiales</taxon>
        <taxon>Burkholderiaceae</taxon>
        <taxon>Burkholderia</taxon>
        <taxon>Burkholderia cepacia complex</taxon>
    </lineage>
</organism>
<sequence length="76" mass="8167">MGGLSIWHWLIVLLIVALVFGTKKLRNIGNDLGSAVKGFKDGMKEGETPADAQQLPRTGTVDVNAKETTRSDSNKA</sequence>
<dbReference type="EMBL" id="CP000440">
    <property type="protein sequence ID" value="ABI85914.1"/>
    <property type="molecule type" value="Genomic_DNA"/>
</dbReference>
<dbReference type="RefSeq" id="WP_006751795.1">
    <property type="nucleotide sequence ID" value="NZ_CP009798.1"/>
</dbReference>
<dbReference type="SMR" id="Q0BIV9"/>
<dbReference type="GeneID" id="93084232"/>
<dbReference type="KEGG" id="bam:Bamb_0354"/>
<dbReference type="PATRIC" id="fig|339670.21.peg.1264"/>
<dbReference type="eggNOG" id="COG1826">
    <property type="taxonomic scope" value="Bacteria"/>
</dbReference>
<dbReference type="Proteomes" id="UP000000662">
    <property type="component" value="Chromosome 1"/>
</dbReference>
<dbReference type="GO" id="GO:0033281">
    <property type="term" value="C:TAT protein transport complex"/>
    <property type="evidence" value="ECO:0007669"/>
    <property type="project" value="UniProtKB-UniRule"/>
</dbReference>
<dbReference type="GO" id="GO:0008320">
    <property type="term" value="F:protein transmembrane transporter activity"/>
    <property type="evidence" value="ECO:0007669"/>
    <property type="project" value="UniProtKB-UniRule"/>
</dbReference>
<dbReference type="GO" id="GO:0043953">
    <property type="term" value="P:protein transport by the Tat complex"/>
    <property type="evidence" value="ECO:0007669"/>
    <property type="project" value="UniProtKB-UniRule"/>
</dbReference>
<dbReference type="Gene3D" id="1.20.5.3310">
    <property type="match status" value="1"/>
</dbReference>
<dbReference type="HAMAP" id="MF_00236">
    <property type="entry name" value="TatA_E"/>
    <property type="match status" value="1"/>
</dbReference>
<dbReference type="InterPro" id="IPR003369">
    <property type="entry name" value="TatA/B/E"/>
</dbReference>
<dbReference type="InterPro" id="IPR006312">
    <property type="entry name" value="TatA/E"/>
</dbReference>
<dbReference type="NCBIfam" id="NF002813">
    <property type="entry name" value="PRK02958.1"/>
    <property type="match status" value="1"/>
</dbReference>
<dbReference type="NCBIfam" id="TIGR01411">
    <property type="entry name" value="tatAE"/>
    <property type="match status" value="1"/>
</dbReference>
<dbReference type="PANTHER" id="PTHR42982">
    <property type="entry name" value="SEC-INDEPENDENT PROTEIN TRANSLOCASE PROTEIN TATA"/>
    <property type="match status" value="1"/>
</dbReference>
<dbReference type="PANTHER" id="PTHR42982:SF1">
    <property type="entry name" value="SEC-INDEPENDENT PROTEIN TRANSLOCASE PROTEIN TATA"/>
    <property type="match status" value="1"/>
</dbReference>
<dbReference type="Pfam" id="PF02416">
    <property type="entry name" value="TatA_B_E"/>
    <property type="match status" value="1"/>
</dbReference>
<accession>Q0BIV9</accession>
<protein>
    <recommendedName>
        <fullName evidence="1">Sec-independent protein translocase protein TatA</fullName>
    </recommendedName>
</protein>